<gene>
    <name evidence="1" type="primary">nuoK</name>
    <name type="ordered locus">SO_1012</name>
</gene>
<proteinExistence type="inferred from homology"/>
<name>NUOK_SHEON</name>
<dbReference type="EC" id="7.1.1.-" evidence="1"/>
<dbReference type="EMBL" id="AE014299">
    <property type="protein sequence ID" value="AAN54085.1"/>
    <property type="molecule type" value="Genomic_DNA"/>
</dbReference>
<dbReference type="RefSeq" id="NP_716640.1">
    <property type="nucleotide sequence ID" value="NC_004347.2"/>
</dbReference>
<dbReference type="RefSeq" id="WP_011071277.1">
    <property type="nucleotide sequence ID" value="NC_004347.2"/>
</dbReference>
<dbReference type="SMR" id="Q8EI38"/>
<dbReference type="STRING" id="211586.SO_1012"/>
<dbReference type="PaxDb" id="211586-SO_1012"/>
<dbReference type="KEGG" id="son:SO_1012"/>
<dbReference type="PATRIC" id="fig|211586.12.peg.968"/>
<dbReference type="eggNOG" id="COG0713">
    <property type="taxonomic scope" value="Bacteria"/>
</dbReference>
<dbReference type="HOGENOM" id="CLU_144724_0_1_6"/>
<dbReference type="OrthoDB" id="9801357at2"/>
<dbReference type="PhylomeDB" id="Q8EI38"/>
<dbReference type="BioCyc" id="SONE211586:G1GMP-938-MONOMER"/>
<dbReference type="Proteomes" id="UP000008186">
    <property type="component" value="Chromosome"/>
</dbReference>
<dbReference type="GO" id="GO:0030964">
    <property type="term" value="C:NADH dehydrogenase complex"/>
    <property type="evidence" value="ECO:0000318"/>
    <property type="project" value="GO_Central"/>
</dbReference>
<dbReference type="GO" id="GO:0005886">
    <property type="term" value="C:plasma membrane"/>
    <property type="evidence" value="ECO:0007669"/>
    <property type="project" value="UniProtKB-SubCell"/>
</dbReference>
<dbReference type="GO" id="GO:0050136">
    <property type="term" value="F:NADH:ubiquinone reductase (non-electrogenic) activity"/>
    <property type="evidence" value="ECO:0007669"/>
    <property type="project" value="UniProtKB-UniRule"/>
</dbReference>
<dbReference type="GO" id="GO:0048038">
    <property type="term" value="F:quinone binding"/>
    <property type="evidence" value="ECO:0007669"/>
    <property type="project" value="UniProtKB-KW"/>
</dbReference>
<dbReference type="GO" id="GO:0042773">
    <property type="term" value="P:ATP synthesis coupled electron transport"/>
    <property type="evidence" value="ECO:0007669"/>
    <property type="project" value="InterPro"/>
</dbReference>
<dbReference type="FunFam" id="1.10.287.3510:FF:000001">
    <property type="entry name" value="NADH-quinone oxidoreductase subunit K"/>
    <property type="match status" value="1"/>
</dbReference>
<dbReference type="Gene3D" id="1.10.287.3510">
    <property type="match status" value="1"/>
</dbReference>
<dbReference type="HAMAP" id="MF_01456">
    <property type="entry name" value="NDH1_NuoK"/>
    <property type="match status" value="1"/>
</dbReference>
<dbReference type="InterPro" id="IPR001133">
    <property type="entry name" value="NADH_UbQ_OxRdtase_chain4L/K"/>
</dbReference>
<dbReference type="InterPro" id="IPR039428">
    <property type="entry name" value="NUOK/Mnh_C1-like"/>
</dbReference>
<dbReference type="NCBIfam" id="NF004319">
    <property type="entry name" value="PRK05715.1-1"/>
    <property type="match status" value="1"/>
</dbReference>
<dbReference type="NCBIfam" id="NF004320">
    <property type="entry name" value="PRK05715.1-2"/>
    <property type="match status" value="1"/>
</dbReference>
<dbReference type="PANTHER" id="PTHR11434:SF16">
    <property type="entry name" value="NADH-UBIQUINONE OXIDOREDUCTASE CHAIN 4L"/>
    <property type="match status" value="1"/>
</dbReference>
<dbReference type="PANTHER" id="PTHR11434">
    <property type="entry name" value="NADH-UBIQUINONE OXIDOREDUCTASE SUBUNIT ND4L"/>
    <property type="match status" value="1"/>
</dbReference>
<dbReference type="Pfam" id="PF00420">
    <property type="entry name" value="Oxidored_q2"/>
    <property type="match status" value="1"/>
</dbReference>
<evidence type="ECO:0000255" key="1">
    <source>
        <dbReference type="HAMAP-Rule" id="MF_01456"/>
    </source>
</evidence>
<comment type="function">
    <text evidence="1">NDH-1 shuttles electrons from NADH, via FMN and iron-sulfur (Fe-S) centers, to quinones in the respiratory chain. The immediate electron acceptor for the enzyme in this species is believed to be ubiquinone. Couples the redox reaction to proton translocation (for every two electrons transferred, four hydrogen ions are translocated across the cytoplasmic membrane), and thus conserves the redox energy in a proton gradient.</text>
</comment>
<comment type="catalytic activity">
    <reaction evidence="1">
        <text>a quinone + NADH + 5 H(+)(in) = a quinol + NAD(+) + 4 H(+)(out)</text>
        <dbReference type="Rhea" id="RHEA:57888"/>
        <dbReference type="ChEBI" id="CHEBI:15378"/>
        <dbReference type="ChEBI" id="CHEBI:24646"/>
        <dbReference type="ChEBI" id="CHEBI:57540"/>
        <dbReference type="ChEBI" id="CHEBI:57945"/>
        <dbReference type="ChEBI" id="CHEBI:132124"/>
    </reaction>
</comment>
<comment type="subunit">
    <text evidence="1">NDH-1 is composed of 13 different subunits. Subunits NuoA, H, J, K, L, M, N constitute the membrane sector of the complex.</text>
</comment>
<comment type="subcellular location">
    <subcellularLocation>
        <location evidence="1">Cell inner membrane</location>
        <topology evidence="1">Multi-pass membrane protein</topology>
    </subcellularLocation>
</comment>
<comment type="similarity">
    <text evidence="1">Belongs to the complex I subunit 4L family.</text>
</comment>
<accession>Q8EI38</accession>
<reference key="1">
    <citation type="journal article" date="2002" name="Nat. Biotechnol.">
        <title>Genome sequence of the dissimilatory metal ion-reducing bacterium Shewanella oneidensis.</title>
        <authorList>
            <person name="Heidelberg J.F."/>
            <person name="Paulsen I.T."/>
            <person name="Nelson K.E."/>
            <person name="Gaidos E.J."/>
            <person name="Nelson W.C."/>
            <person name="Read T.D."/>
            <person name="Eisen J.A."/>
            <person name="Seshadri R."/>
            <person name="Ward N.L."/>
            <person name="Methe B.A."/>
            <person name="Clayton R.A."/>
            <person name="Meyer T."/>
            <person name="Tsapin A."/>
            <person name="Scott J."/>
            <person name="Beanan M.J."/>
            <person name="Brinkac L.M."/>
            <person name="Daugherty S.C."/>
            <person name="DeBoy R.T."/>
            <person name="Dodson R.J."/>
            <person name="Durkin A.S."/>
            <person name="Haft D.H."/>
            <person name="Kolonay J.F."/>
            <person name="Madupu R."/>
            <person name="Peterson J.D."/>
            <person name="Umayam L.A."/>
            <person name="White O."/>
            <person name="Wolf A.M."/>
            <person name="Vamathevan J.J."/>
            <person name="Weidman J.F."/>
            <person name="Impraim M."/>
            <person name="Lee K."/>
            <person name="Berry K.J."/>
            <person name="Lee C."/>
            <person name="Mueller J."/>
            <person name="Khouri H.M."/>
            <person name="Gill J."/>
            <person name="Utterback T.R."/>
            <person name="McDonald L.A."/>
            <person name="Feldblyum T.V."/>
            <person name="Smith H.O."/>
            <person name="Venter J.C."/>
            <person name="Nealson K.H."/>
            <person name="Fraser C.M."/>
        </authorList>
    </citation>
    <scope>NUCLEOTIDE SEQUENCE [LARGE SCALE GENOMIC DNA]</scope>
    <source>
        <strain>ATCC 700550 / JCM 31522 / CIP 106686 / LMG 19005 / NCIMB 14063 / MR-1</strain>
    </source>
</reference>
<sequence length="102" mass="11097">MTGIPMEHGLLLAAALFCIGLCGLLIRRNLLYILMSIEIMMNASALAFVVAGSRWAQADGQIMYILVISLAAAEASIGLALLLLLYRRYHTLNVDTVSEMRG</sequence>
<feature type="chain" id="PRO_0000390234" description="NADH-quinone oxidoreductase subunit K">
    <location>
        <begin position="1"/>
        <end position="102"/>
    </location>
</feature>
<feature type="transmembrane region" description="Helical" evidence="1">
    <location>
        <begin position="6"/>
        <end position="26"/>
    </location>
</feature>
<feature type="transmembrane region" description="Helical" evidence="1">
    <location>
        <begin position="30"/>
        <end position="50"/>
    </location>
</feature>
<feature type="transmembrane region" description="Helical" evidence="1">
    <location>
        <begin position="65"/>
        <end position="85"/>
    </location>
</feature>
<keyword id="KW-0997">Cell inner membrane</keyword>
<keyword id="KW-1003">Cell membrane</keyword>
<keyword id="KW-0472">Membrane</keyword>
<keyword id="KW-0520">NAD</keyword>
<keyword id="KW-0874">Quinone</keyword>
<keyword id="KW-1185">Reference proteome</keyword>
<keyword id="KW-1278">Translocase</keyword>
<keyword id="KW-0812">Transmembrane</keyword>
<keyword id="KW-1133">Transmembrane helix</keyword>
<keyword id="KW-0813">Transport</keyword>
<keyword id="KW-0830">Ubiquinone</keyword>
<protein>
    <recommendedName>
        <fullName evidence="1">NADH-quinone oxidoreductase subunit K</fullName>
        <ecNumber evidence="1">7.1.1.-</ecNumber>
    </recommendedName>
    <alternativeName>
        <fullName evidence="1">NADH dehydrogenase I subunit K</fullName>
    </alternativeName>
    <alternativeName>
        <fullName evidence="1">NDH-1 subunit K</fullName>
    </alternativeName>
</protein>
<organism>
    <name type="scientific">Shewanella oneidensis (strain ATCC 700550 / JCM 31522 / CIP 106686 / LMG 19005 / NCIMB 14063 / MR-1)</name>
    <dbReference type="NCBI Taxonomy" id="211586"/>
    <lineage>
        <taxon>Bacteria</taxon>
        <taxon>Pseudomonadati</taxon>
        <taxon>Pseudomonadota</taxon>
        <taxon>Gammaproteobacteria</taxon>
        <taxon>Alteromonadales</taxon>
        <taxon>Shewanellaceae</taxon>
        <taxon>Shewanella</taxon>
    </lineage>
</organism>